<dbReference type="EC" id="6.3.2.9" evidence="1"/>
<dbReference type="EMBL" id="AE017354">
    <property type="protein sequence ID" value="AAU28674.1"/>
    <property type="molecule type" value="Genomic_DNA"/>
</dbReference>
<dbReference type="RefSeq" id="WP_010948316.1">
    <property type="nucleotide sequence ID" value="NC_002942.5"/>
</dbReference>
<dbReference type="RefSeq" id="YP_096621.1">
    <property type="nucleotide sequence ID" value="NC_002942.5"/>
</dbReference>
<dbReference type="SMR" id="Q5ZSA3"/>
<dbReference type="STRING" id="272624.lpg2616"/>
<dbReference type="PaxDb" id="272624-lpg2616"/>
<dbReference type="GeneID" id="57036615"/>
<dbReference type="KEGG" id="lpn:lpg2616"/>
<dbReference type="PATRIC" id="fig|272624.6.peg.2791"/>
<dbReference type="eggNOG" id="COG0771">
    <property type="taxonomic scope" value="Bacteria"/>
</dbReference>
<dbReference type="HOGENOM" id="CLU_032540_1_0_6"/>
<dbReference type="OrthoDB" id="9809796at2"/>
<dbReference type="UniPathway" id="UPA00219"/>
<dbReference type="Proteomes" id="UP000000609">
    <property type="component" value="Chromosome"/>
</dbReference>
<dbReference type="GO" id="GO:0005737">
    <property type="term" value="C:cytoplasm"/>
    <property type="evidence" value="ECO:0007669"/>
    <property type="project" value="UniProtKB-SubCell"/>
</dbReference>
<dbReference type="GO" id="GO:0005524">
    <property type="term" value="F:ATP binding"/>
    <property type="evidence" value="ECO:0007669"/>
    <property type="project" value="UniProtKB-UniRule"/>
</dbReference>
<dbReference type="GO" id="GO:0008764">
    <property type="term" value="F:UDP-N-acetylmuramoylalanine-D-glutamate ligase activity"/>
    <property type="evidence" value="ECO:0007669"/>
    <property type="project" value="UniProtKB-UniRule"/>
</dbReference>
<dbReference type="GO" id="GO:0051301">
    <property type="term" value="P:cell division"/>
    <property type="evidence" value="ECO:0007669"/>
    <property type="project" value="UniProtKB-KW"/>
</dbReference>
<dbReference type="GO" id="GO:0071555">
    <property type="term" value="P:cell wall organization"/>
    <property type="evidence" value="ECO:0007669"/>
    <property type="project" value="UniProtKB-KW"/>
</dbReference>
<dbReference type="GO" id="GO:0009252">
    <property type="term" value="P:peptidoglycan biosynthetic process"/>
    <property type="evidence" value="ECO:0007669"/>
    <property type="project" value="UniProtKB-UniRule"/>
</dbReference>
<dbReference type="GO" id="GO:0008360">
    <property type="term" value="P:regulation of cell shape"/>
    <property type="evidence" value="ECO:0007669"/>
    <property type="project" value="UniProtKB-KW"/>
</dbReference>
<dbReference type="Gene3D" id="3.90.190.20">
    <property type="entry name" value="Mur ligase, C-terminal domain"/>
    <property type="match status" value="1"/>
</dbReference>
<dbReference type="Gene3D" id="3.40.1190.10">
    <property type="entry name" value="Mur-like, catalytic domain"/>
    <property type="match status" value="1"/>
</dbReference>
<dbReference type="Gene3D" id="3.40.50.720">
    <property type="entry name" value="NAD(P)-binding Rossmann-like Domain"/>
    <property type="match status" value="1"/>
</dbReference>
<dbReference type="HAMAP" id="MF_00639">
    <property type="entry name" value="MurD"/>
    <property type="match status" value="1"/>
</dbReference>
<dbReference type="InterPro" id="IPR036565">
    <property type="entry name" value="Mur-like_cat_sf"/>
</dbReference>
<dbReference type="InterPro" id="IPR004101">
    <property type="entry name" value="Mur_ligase_C"/>
</dbReference>
<dbReference type="InterPro" id="IPR036615">
    <property type="entry name" value="Mur_ligase_C_dom_sf"/>
</dbReference>
<dbReference type="InterPro" id="IPR013221">
    <property type="entry name" value="Mur_ligase_cen"/>
</dbReference>
<dbReference type="InterPro" id="IPR005762">
    <property type="entry name" value="MurD"/>
</dbReference>
<dbReference type="NCBIfam" id="TIGR01087">
    <property type="entry name" value="murD"/>
    <property type="match status" value="1"/>
</dbReference>
<dbReference type="PANTHER" id="PTHR43692">
    <property type="entry name" value="UDP-N-ACETYLMURAMOYLALANINE--D-GLUTAMATE LIGASE"/>
    <property type="match status" value="1"/>
</dbReference>
<dbReference type="PANTHER" id="PTHR43692:SF1">
    <property type="entry name" value="UDP-N-ACETYLMURAMOYLALANINE--D-GLUTAMATE LIGASE"/>
    <property type="match status" value="1"/>
</dbReference>
<dbReference type="Pfam" id="PF02875">
    <property type="entry name" value="Mur_ligase_C"/>
    <property type="match status" value="1"/>
</dbReference>
<dbReference type="Pfam" id="PF08245">
    <property type="entry name" value="Mur_ligase_M"/>
    <property type="match status" value="1"/>
</dbReference>
<dbReference type="Pfam" id="PF21799">
    <property type="entry name" value="MurD-like_N"/>
    <property type="match status" value="1"/>
</dbReference>
<dbReference type="SUPFAM" id="SSF51984">
    <property type="entry name" value="MurCD N-terminal domain"/>
    <property type="match status" value="1"/>
</dbReference>
<dbReference type="SUPFAM" id="SSF53623">
    <property type="entry name" value="MurD-like peptide ligases, catalytic domain"/>
    <property type="match status" value="1"/>
</dbReference>
<dbReference type="SUPFAM" id="SSF53244">
    <property type="entry name" value="MurD-like peptide ligases, peptide-binding domain"/>
    <property type="match status" value="1"/>
</dbReference>
<keyword id="KW-0067">ATP-binding</keyword>
<keyword id="KW-0131">Cell cycle</keyword>
<keyword id="KW-0132">Cell division</keyword>
<keyword id="KW-0133">Cell shape</keyword>
<keyword id="KW-0961">Cell wall biogenesis/degradation</keyword>
<keyword id="KW-0963">Cytoplasm</keyword>
<keyword id="KW-0436">Ligase</keyword>
<keyword id="KW-0547">Nucleotide-binding</keyword>
<keyword id="KW-0573">Peptidoglycan synthesis</keyword>
<keyword id="KW-1185">Reference proteome</keyword>
<organism>
    <name type="scientific">Legionella pneumophila subsp. pneumophila (strain Philadelphia 1 / ATCC 33152 / DSM 7513)</name>
    <dbReference type="NCBI Taxonomy" id="272624"/>
    <lineage>
        <taxon>Bacteria</taxon>
        <taxon>Pseudomonadati</taxon>
        <taxon>Pseudomonadota</taxon>
        <taxon>Gammaproteobacteria</taxon>
        <taxon>Legionellales</taxon>
        <taxon>Legionellaceae</taxon>
        <taxon>Legionella</taxon>
    </lineage>
</organism>
<protein>
    <recommendedName>
        <fullName evidence="1">UDP-N-acetylmuramoylalanine--D-glutamate ligase</fullName>
        <ecNumber evidence="1">6.3.2.9</ecNumber>
    </recommendedName>
    <alternativeName>
        <fullName evidence="1">D-glutamic acid-adding enzyme</fullName>
    </alternativeName>
    <alternativeName>
        <fullName evidence="1">UDP-N-acetylmuramoyl-L-alanyl-D-glutamate synthetase</fullName>
    </alternativeName>
</protein>
<feature type="chain" id="PRO_0000109034" description="UDP-N-acetylmuramoylalanine--D-glutamate ligase">
    <location>
        <begin position="1"/>
        <end position="447"/>
    </location>
</feature>
<feature type="binding site" evidence="1">
    <location>
        <begin position="112"/>
        <end position="118"/>
    </location>
    <ligand>
        <name>ATP</name>
        <dbReference type="ChEBI" id="CHEBI:30616"/>
    </ligand>
</feature>
<gene>
    <name evidence="1" type="primary">murD</name>
    <name type="ordered locus">lpg2616</name>
</gene>
<comment type="function">
    <text evidence="1">Cell wall formation. Catalyzes the addition of glutamate to the nucleotide precursor UDP-N-acetylmuramoyl-L-alanine (UMA).</text>
</comment>
<comment type="catalytic activity">
    <reaction evidence="1">
        <text>UDP-N-acetyl-alpha-D-muramoyl-L-alanine + D-glutamate + ATP = UDP-N-acetyl-alpha-D-muramoyl-L-alanyl-D-glutamate + ADP + phosphate + H(+)</text>
        <dbReference type="Rhea" id="RHEA:16429"/>
        <dbReference type="ChEBI" id="CHEBI:15378"/>
        <dbReference type="ChEBI" id="CHEBI:29986"/>
        <dbReference type="ChEBI" id="CHEBI:30616"/>
        <dbReference type="ChEBI" id="CHEBI:43474"/>
        <dbReference type="ChEBI" id="CHEBI:83898"/>
        <dbReference type="ChEBI" id="CHEBI:83900"/>
        <dbReference type="ChEBI" id="CHEBI:456216"/>
        <dbReference type="EC" id="6.3.2.9"/>
    </reaction>
</comment>
<comment type="pathway">
    <text evidence="1">Cell wall biogenesis; peptidoglycan biosynthesis.</text>
</comment>
<comment type="subcellular location">
    <subcellularLocation>
        <location evidence="1">Cytoplasm</location>
    </subcellularLocation>
</comment>
<comment type="similarity">
    <text evidence="1">Belongs to the MurCDEF family.</text>
</comment>
<name>MURD_LEGPH</name>
<accession>Q5ZSA3</accession>
<reference key="1">
    <citation type="journal article" date="2004" name="Science">
        <title>The genomic sequence of the accidental pathogen Legionella pneumophila.</title>
        <authorList>
            <person name="Chien M."/>
            <person name="Morozova I."/>
            <person name="Shi S."/>
            <person name="Sheng H."/>
            <person name="Chen J."/>
            <person name="Gomez S.M."/>
            <person name="Asamani G."/>
            <person name="Hill K."/>
            <person name="Nuara J."/>
            <person name="Feder M."/>
            <person name="Rineer J."/>
            <person name="Greenberg J.J."/>
            <person name="Steshenko V."/>
            <person name="Park S.H."/>
            <person name="Zhao B."/>
            <person name="Teplitskaya E."/>
            <person name="Edwards J.R."/>
            <person name="Pampou S."/>
            <person name="Georghiou A."/>
            <person name="Chou I.-C."/>
            <person name="Iannuccilli W."/>
            <person name="Ulz M.E."/>
            <person name="Kim D.H."/>
            <person name="Geringer-Sameth A."/>
            <person name="Goldsberry C."/>
            <person name="Morozov P."/>
            <person name="Fischer S.G."/>
            <person name="Segal G."/>
            <person name="Qu X."/>
            <person name="Rzhetsky A."/>
            <person name="Zhang P."/>
            <person name="Cayanis E."/>
            <person name="De Jong P.J."/>
            <person name="Ju J."/>
            <person name="Kalachikov S."/>
            <person name="Shuman H.A."/>
            <person name="Russo J.J."/>
        </authorList>
    </citation>
    <scope>NUCLEOTIDE SEQUENCE [LARGE SCALE GENOMIC DNA]</scope>
    <source>
        <strain>Philadelphia 1 / ATCC 33152 / DSM 7513</strain>
    </source>
</reference>
<evidence type="ECO:0000255" key="1">
    <source>
        <dbReference type="HAMAP-Rule" id="MF_00639"/>
    </source>
</evidence>
<proteinExistence type="inferred from homology"/>
<sequence length="447" mass="48158">MNHSLYLVAGLGKTGLSIARYLKRNNKSFVVFDTRKEAPGLAEFQNEFPDVPIYLQQTPDEVISQVTDVITSPGLALDTPVLERARQAGASIYGDIECLAREISAPVIAITGTNGKSTVTTLVGEMAKAAGFRVAVAGNIGTPVLDMLDDEHHYDLWVLELSSFQLDLTYSLSPVVATILNVTPDHLDRHHTMEAYTQAKQRIYRGAKAVLFNREDVYTVPHQSCQADIKCISFGKDAPSMGNWGLIEQENTTYLAKGMERLLPVESILIKGVHNWMNALAACALAEAAGISMQHILNVLKTFPGLPHRCQWVREVDGVGWINDSKGTNIGATISAINGIGGSMQGKIVLIAGGQGKGADFQELAQPVSEFVRSIVLIGEDADKIESALAKVVPVVRASSLEGAVTIAKTCAKPGDVVLLSPACASLDMFRDFNHRGDVFTSSVRGL</sequence>